<evidence type="ECO:0000255" key="1">
    <source>
        <dbReference type="HAMAP-Rule" id="MF_00633"/>
    </source>
</evidence>
<sequence>MSKVYDWFQERLEVQALADDITSKYVPPHVNIFYCLGGVTLICFLVQFATGFAMTYYYKPTVAEAFSSVNYIMDEVSFGWLIRSIHRWSASMMVLAMILHTFRVYLTGGFKRPRELTWVTGVLLACLTVSFGVTGYSLPWDQVGYWAVKIVTQVPSAIPVVGDLIVEFLRGGAGVGQETLTRFYSAHTFVLPWLTVVFMLMHFLMIRKQGISGPL</sequence>
<accession>Q7NJB3</accession>
<gene>
    <name evidence="1" type="primary">petB</name>
    <name type="ordered locus">gll1919</name>
</gene>
<keyword id="KW-0997">Cell inner membrane</keyword>
<keyword id="KW-1003">Cell membrane</keyword>
<keyword id="KW-0249">Electron transport</keyword>
<keyword id="KW-0349">Heme</keyword>
<keyword id="KW-0408">Iron</keyword>
<keyword id="KW-0472">Membrane</keyword>
<keyword id="KW-0479">Metal-binding</keyword>
<keyword id="KW-0602">Photosynthesis</keyword>
<keyword id="KW-1185">Reference proteome</keyword>
<keyword id="KW-0812">Transmembrane</keyword>
<keyword id="KW-1133">Transmembrane helix</keyword>
<keyword id="KW-0813">Transport</keyword>
<name>CYB6_GLOVI</name>
<dbReference type="EMBL" id="BA000045">
    <property type="protein sequence ID" value="BAC89860.1"/>
    <property type="molecule type" value="Genomic_DNA"/>
</dbReference>
<dbReference type="RefSeq" id="NP_924865.1">
    <property type="nucleotide sequence ID" value="NC_005125.1"/>
</dbReference>
<dbReference type="RefSeq" id="WP_011141917.1">
    <property type="nucleotide sequence ID" value="NC_005125.1"/>
</dbReference>
<dbReference type="SMR" id="Q7NJB3"/>
<dbReference type="STRING" id="251221.gene:10759411"/>
<dbReference type="EnsemblBacteria" id="BAC89860">
    <property type="protein sequence ID" value="BAC89860"/>
    <property type="gene ID" value="BAC89860"/>
</dbReference>
<dbReference type="KEGG" id="gvi:gll1919"/>
<dbReference type="PATRIC" id="fig|251221.4.peg.1953"/>
<dbReference type="eggNOG" id="COG1290">
    <property type="taxonomic scope" value="Bacteria"/>
</dbReference>
<dbReference type="HOGENOM" id="CLU_031114_0_2_3"/>
<dbReference type="InParanoid" id="Q7NJB3"/>
<dbReference type="OrthoDB" id="9804503at2"/>
<dbReference type="Proteomes" id="UP000000557">
    <property type="component" value="Chromosome"/>
</dbReference>
<dbReference type="GO" id="GO:0016020">
    <property type="term" value="C:membrane"/>
    <property type="evidence" value="ECO:0000318"/>
    <property type="project" value="GO_Central"/>
</dbReference>
<dbReference type="GO" id="GO:0005886">
    <property type="term" value="C:plasma membrane"/>
    <property type="evidence" value="ECO:0007669"/>
    <property type="project" value="UniProtKB-SubCell"/>
</dbReference>
<dbReference type="GO" id="GO:0045158">
    <property type="term" value="F:electron transporter, transferring electrons within cytochrome b6/f complex of photosystem II activity"/>
    <property type="evidence" value="ECO:0007669"/>
    <property type="project" value="UniProtKB-UniRule"/>
</dbReference>
<dbReference type="GO" id="GO:0046872">
    <property type="term" value="F:metal ion binding"/>
    <property type="evidence" value="ECO:0007669"/>
    <property type="project" value="UniProtKB-KW"/>
</dbReference>
<dbReference type="GO" id="GO:0016491">
    <property type="term" value="F:oxidoreductase activity"/>
    <property type="evidence" value="ECO:0007669"/>
    <property type="project" value="InterPro"/>
</dbReference>
<dbReference type="GO" id="GO:0015979">
    <property type="term" value="P:photosynthesis"/>
    <property type="evidence" value="ECO:0007669"/>
    <property type="project" value="UniProtKB-UniRule"/>
</dbReference>
<dbReference type="GO" id="GO:0022904">
    <property type="term" value="P:respiratory electron transport chain"/>
    <property type="evidence" value="ECO:0007669"/>
    <property type="project" value="InterPro"/>
</dbReference>
<dbReference type="CDD" id="cd00284">
    <property type="entry name" value="Cytochrome_b_N"/>
    <property type="match status" value="1"/>
</dbReference>
<dbReference type="FunFam" id="1.20.810.10:FF:000001">
    <property type="entry name" value="Cytochrome b6"/>
    <property type="match status" value="1"/>
</dbReference>
<dbReference type="Gene3D" id="1.20.810.10">
    <property type="entry name" value="Cytochrome Bc1 Complex, Chain C"/>
    <property type="match status" value="1"/>
</dbReference>
<dbReference type="HAMAP" id="MF_00633">
    <property type="entry name" value="Cytb6_f_cytb6"/>
    <property type="match status" value="1"/>
</dbReference>
<dbReference type="InterPro" id="IPR005797">
    <property type="entry name" value="Cyt_b/b6_N"/>
</dbReference>
<dbReference type="InterPro" id="IPR023530">
    <property type="entry name" value="Cyt_B6_PetB"/>
</dbReference>
<dbReference type="InterPro" id="IPR027387">
    <property type="entry name" value="Cytb/b6-like_sf"/>
</dbReference>
<dbReference type="InterPro" id="IPR048259">
    <property type="entry name" value="Cytochrome_b_N_euk/bac"/>
</dbReference>
<dbReference type="InterPro" id="IPR016174">
    <property type="entry name" value="Di-haem_cyt_TM"/>
</dbReference>
<dbReference type="NCBIfam" id="NF002990">
    <property type="entry name" value="PRK03735.1"/>
    <property type="match status" value="1"/>
</dbReference>
<dbReference type="PANTHER" id="PTHR19271">
    <property type="entry name" value="CYTOCHROME B"/>
    <property type="match status" value="1"/>
</dbReference>
<dbReference type="PANTHER" id="PTHR19271:SF16">
    <property type="entry name" value="CYTOCHROME B"/>
    <property type="match status" value="1"/>
</dbReference>
<dbReference type="Pfam" id="PF00033">
    <property type="entry name" value="Cytochrome_B"/>
    <property type="match status" value="1"/>
</dbReference>
<dbReference type="PIRSF" id="PIRSF000032">
    <property type="entry name" value="Cytochrome_b6"/>
    <property type="match status" value="1"/>
</dbReference>
<dbReference type="SUPFAM" id="SSF81342">
    <property type="entry name" value="Transmembrane di-heme cytochromes"/>
    <property type="match status" value="1"/>
</dbReference>
<dbReference type="PROSITE" id="PS51002">
    <property type="entry name" value="CYTB_NTER"/>
    <property type="match status" value="1"/>
</dbReference>
<feature type="chain" id="PRO_0000061826" description="Cytochrome b6">
    <location>
        <begin position="1"/>
        <end position="215"/>
    </location>
</feature>
<feature type="transmembrane region" description="Helical" evidence="1">
    <location>
        <begin position="32"/>
        <end position="52"/>
    </location>
</feature>
<feature type="transmembrane region" description="Helical" evidence="1">
    <location>
        <begin position="90"/>
        <end position="110"/>
    </location>
</feature>
<feature type="transmembrane region" description="Helical" evidence="1">
    <location>
        <begin position="116"/>
        <end position="136"/>
    </location>
</feature>
<feature type="transmembrane region" description="Helical" evidence="1">
    <location>
        <begin position="186"/>
        <end position="206"/>
    </location>
</feature>
<feature type="binding site" description="covalent" evidence="1">
    <location>
        <position position="35"/>
    </location>
    <ligand>
        <name>heme c</name>
        <dbReference type="ChEBI" id="CHEBI:61717"/>
    </ligand>
</feature>
<feature type="binding site" description="axial binding residue" evidence="1">
    <location>
        <position position="86"/>
    </location>
    <ligand>
        <name>heme b</name>
        <dbReference type="ChEBI" id="CHEBI:60344"/>
        <label>2</label>
    </ligand>
    <ligandPart>
        <name>Fe</name>
        <dbReference type="ChEBI" id="CHEBI:18248"/>
    </ligandPart>
</feature>
<feature type="binding site" description="axial binding residue" evidence="1">
    <location>
        <position position="100"/>
    </location>
    <ligand>
        <name>heme b</name>
        <dbReference type="ChEBI" id="CHEBI:60344"/>
        <label>1</label>
    </ligand>
    <ligandPart>
        <name>Fe</name>
        <dbReference type="ChEBI" id="CHEBI:18248"/>
    </ligandPart>
</feature>
<feature type="binding site" description="axial binding residue" evidence="1">
    <location>
        <position position="187"/>
    </location>
    <ligand>
        <name>heme b</name>
        <dbReference type="ChEBI" id="CHEBI:60344"/>
        <label>2</label>
    </ligand>
    <ligandPart>
        <name>Fe</name>
        <dbReference type="ChEBI" id="CHEBI:18248"/>
    </ligandPart>
</feature>
<feature type="binding site" description="axial binding residue" evidence="1">
    <location>
        <position position="202"/>
    </location>
    <ligand>
        <name>heme b</name>
        <dbReference type="ChEBI" id="CHEBI:60344"/>
        <label>1</label>
    </ligand>
    <ligandPart>
        <name>Fe</name>
        <dbReference type="ChEBI" id="CHEBI:18248"/>
    </ligandPart>
</feature>
<reference key="1">
    <citation type="journal article" date="2003" name="DNA Res.">
        <title>Complete genome structure of Gloeobacter violaceus PCC 7421, a cyanobacterium that lacks thylakoids.</title>
        <authorList>
            <person name="Nakamura Y."/>
            <person name="Kaneko T."/>
            <person name="Sato S."/>
            <person name="Mimuro M."/>
            <person name="Miyashita H."/>
            <person name="Tsuchiya T."/>
            <person name="Sasamoto S."/>
            <person name="Watanabe A."/>
            <person name="Kawashima K."/>
            <person name="Kishida Y."/>
            <person name="Kiyokawa C."/>
            <person name="Kohara M."/>
            <person name="Matsumoto M."/>
            <person name="Matsuno A."/>
            <person name="Nakazaki N."/>
            <person name="Shimpo S."/>
            <person name="Takeuchi C."/>
            <person name="Yamada M."/>
            <person name="Tabata S."/>
        </authorList>
    </citation>
    <scope>NUCLEOTIDE SEQUENCE [LARGE SCALE GENOMIC DNA]</scope>
    <source>
        <strain>ATCC 29082 / PCC 7421</strain>
    </source>
</reference>
<protein>
    <recommendedName>
        <fullName evidence="1">Cytochrome b6</fullName>
    </recommendedName>
</protein>
<comment type="function">
    <text evidence="1">Component of the cytochrome b6-f complex, which mediates electron transfer between photosystem II (PSII) and photosystem I (PSI), cyclic electron flow around PSI, and state transitions.</text>
</comment>
<comment type="cofactor">
    <cofactor evidence="1">
        <name>heme b</name>
        <dbReference type="ChEBI" id="CHEBI:60344"/>
    </cofactor>
    <text evidence="1">Binds 2 heme b groups non-covalently with two histidine residues as axial ligands.</text>
</comment>
<comment type="cofactor">
    <cofactor evidence="1">
        <name>heme c</name>
        <dbReference type="ChEBI" id="CHEBI:61717"/>
    </cofactor>
    <text evidence="1">Binds one heme group covalently by a single cysteine link with no axial amino acid ligand. This heme was named heme ci.</text>
</comment>
<comment type="subunit">
    <text evidence="1">The 4 large subunits of the cytochrome b6-f complex are cytochrome b6, subunit IV (17 kDa polypeptide, PetD), cytochrome f and the Rieske protein, while the 4 small subunits are PetG, PetL, PetM and PetN. The complex functions as a dimer.</text>
</comment>
<comment type="subcellular location">
    <subcellularLocation>
        <location evidence="1">Cell inner membrane</location>
        <topology evidence="1">Multi-pass membrane protein</topology>
    </subcellularLocation>
</comment>
<comment type="miscellaneous">
    <text evidence="1">Heme 1 (or BH or b566) is high-potential and absorbs at about 566 nm, and heme 2 (or BL or b562) is low-potential and absorbs at about 562 nm.</text>
</comment>
<comment type="similarity">
    <text evidence="1">Belongs to the cytochrome b family. PetB subfamily.</text>
</comment>
<organism>
    <name type="scientific">Gloeobacter violaceus (strain ATCC 29082 / PCC 7421)</name>
    <dbReference type="NCBI Taxonomy" id="251221"/>
    <lineage>
        <taxon>Bacteria</taxon>
        <taxon>Bacillati</taxon>
        <taxon>Cyanobacteriota</taxon>
        <taxon>Cyanophyceae</taxon>
        <taxon>Gloeobacterales</taxon>
        <taxon>Gloeobacteraceae</taxon>
        <taxon>Gloeobacter</taxon>
    </lineage>
</organism>
<proteinExistence type="inferred from homology"/>